<gene>
    <name evidence="1" type="primary">pncB</name>
    <name type="ordered locus">VV1_2372</name>
</gene>
<dbReference type="EC" id="6.3.4.21" evidence="1"/>
<dbReference type="EMBL" id="AE016795">
    <property type="protein sequence ID" value="AAO10746.1"/>
    <property type="molecule type" value="Genomic_DNA"/>
</dbReference>
<dbReference type="RefSeq" id="WP_011080239.1">
    <property type="nucleotide sequence ID" value="NC_004459.3"/>
</dbReference>
<dbReference type="SMR" id="Q8DA38"/>
<dbReference type="KEGG" id="vvu:VV1_2372"/>
<dbReference type="HOGENOM" id="CLU_030991_1_0_6"/>
<dbReference type="UniPathway" id="UPA00253">
    <property type="reaction ID" value="UER00457"/>
</dbReference>
<dbReference type="Proteomes" id="UP000002275">
    <property type="component" value="Chromosome 1"/>
</dbReference>
<dbReference type="GO" id="GO:0005829">
    <property type="term" value="C:cytosol"/>
    <property type="evidence" value="ECO:0007669"/>
    <property type="project" value="TreeGrafter"/>
</dbReference>
<dbReference type="GO" id="GO:0004516">
    <property type="term" value="F:nicotinate phosphoribosyltransferase activity"/>
    <property type="evidence" value="ECO:0007669"/>
    <property type="project" value="UniProtKB-UniRule"/>
</dbReference>
<dbReference type="GO" id="GO:0034355">
    <property type="term" value="P:NAD biosynthetic process via the salvage pathway"/>
    <property type="evidence" value="ECO:0007669"/>
    <property type="project" value="TreeGrafter"/>
</dbReference>
<dbReference type="CDD" id="cd01401">
    <property type="entry name" value="PncB_like"/>
    <property type="match status" value="1"/>
</dbReference>
<dbReference type="Gene3D" id="3.20.140.10">
    <property type="entry name" value="nicotinate phosphoribosyltransferase"/>
    <property type="match status" value="1"/>
</dbReference>
<dbReference type="HAMAP" id="MF_00570">
    <property type="entry name" value="NAPRTase"/>
    <property type="match status" value="1"/>
</dbReference>
<dbReference type="InterPro" id="IPR041525">
    <property type="entry name" value="N/Namide_PRibTrfase"/>
</dbReference>
<dbReference type="InterPro" id="IPR040727">
    <property type="entry name" value="NAPRTase_N"/>
</dbReference>
<dbReference type="InterPro" id="IPR006406">
    <property type="entry name" value="Nic_PRibTrfase"/>
</dbReference>
<dbReference type="InterPro" id="IPR007229">
    <property type="entry name" value="Nic_PRibTrfase-Fam"/>
</dbReference>
<dbReference type="InterPro" id="IPR036068">
    <property type="entry name" value="Nicotinate_pribotase-like_C"/>
</dbReference>
<dbReference type="NCBIfam" id="TIGR01514">
    <property type="entry name" value="NAPRTase"/>
    <property type="match status" value="1"/>
</dbReference>
<dbReference type="NCBIfam" id="NF003704">
    <property type="entry name" value="PRK05321.1"/>
    <property type="match status" value="1"/>
</dbReference>
<dbReference type="PANTHER" id="PTHR11098">
    <property type="entry name" value="NICOTINATE PHOSPHORIBOSYLTRANSFERASE"/>
    <property type="match status" value="1"/>
</dbReference>
<dbReference type="PANTHER" id="PTHR11098:SF1">
    <property type="entry name" value="NICOTINATE PHOSPHORIBOSYLTRANSFERASE"/>
    <property type="match status" value="1"/>
</dbReference>
<dbReference type="Pfam" id="PF04095">
    <property type="entry name" value="NAPRTase"/>
    <property type="match status" value="1"/>
</dbReference>
<dbReference type="Pfam" id="PF17767">
    <property type="entry name" value="NAPRTase_N"/>
    <property type="match status" value="1"/>
</dbReference>
<dbReference type="PIRSF" id="PIRSF000484">
    <property type="entry name" value="NAPRT"/>
    <property type="match status" value="1"/>
</dbReference>
<dbReference type="SUPFAM" id="SSF51690">
    <property type="entry name" value="Nicotinate/Quinolinate PRTase C-terminal domain-like"/>
    <property type="match status" value="1"/>
</dbReference>
<dbReference type="SUPFAM" id="SSF54675">
    <property type="entry name" value="Nicotinate/Quinolinate PRTase N-terminal domain-like"/>
    <property type="match status" value="1"/>
</dbReference>
<keyword id="KW-0436">Ligase</keyword>
<keyword id="KW-0597">Phosphoprotein</keyword>
<keyword id="KW-0662">Pyridine nucleotide biosynthesis</keyword>
<sequence length="437" mass="50001">MCAPLFQPAIIQSVLDLDVYKINMMQAAYRFYPQTQVRYELIVRSDDNLSDLVEEVREEINRLAELRFDAAQLAYLAEKAPYLTAEFLSYLETFRFHPQQQVSVGIFRTAQGDCQLRVTINGIWHETILYETLVMSIISELRNRRYWAQIPQSQLHKVLEDKLDFLDSELKRRNITNFRFSEMGTRRRFSFAAQKTMLDVLRARVPELLLGTSNYHLAQEFNLTPIGTVAHEWTMAHQALVAIQHSQRVALDKWLEAFNGSLGIALTDTIGIDAFLSDFDLDKATAYAGVRHDSGSPFVWGDKIIAHYESLGIDPTTKTLIFTDGLDFARALDICEYFAGRAQISFGIGTFLANDMGNWTNDKGTRYQPISMVVKMAECNGSPVAKISDEPEKAMCEDIFFLMNLKQRFGLEVDLDKAIETLKQMKRQQKKRIQSVA</sequence>
<proteinExistence type="inferred from homology"/>
<name>PNCB_VIBVU</name>
<accession>Q8DA38</accession>
<protein>
    <recommendedName>
        <fullName evidence="1">Nicotinate phosphoribosyltransferase</fullName>
        <shortName evidence="1">NAPRTase</shortName>
        <ecNumber evidence="1">6.3.4.21</ecNumber>
    </recommendedName>
</protein>
<evidence type="ECO:0000255" key="1">
    <source>
        <dbReference type="HAMAP-Rule" id="MF_00570"/>
    </source>
</evidence>
<reference key="1">
    <citation type="submission" date="2002-12" db="EMBL/GenBank/DDBJ databases">
        <title>Complete genome sequence of Vibrio vulnificus CMCP6.</title>
        <authorList>
            <person name="Rhee J.H."/>
            <person name="Kim S.Y."/>
            <person name="Chung S.S."/>
            <person name="Kim J.J."/>
            <person name="Moon Y.H."/>
            <person name="Jeong H."/>
            <person name="Choy H.E."/>
        </authorList>
    </citation>
    <scope>NUCLEOTIDE SEQUENCE [LARGE SCALE GENOMIC DNA]</scope>
    <source>
        <strain>CMCP6</strain>
    </source>
</reference>
<feature type="chain" id="PRO_0000205849" description="Nicotinate phosphoribosyltransferase">
    <location>
        <begin position="1"/>
        <end position="437"/>
    </location>
</feature>
<feature type="modified residue" description="Phosphohistidine; by autocatalysis" evidence="1">
    <location>
        <position position="231"/>
    </location>
</feature>
<organism>
    <name type="scientific">Vibrio vulnificus (strain CMCP6)</name>
    <dbReference type="NCBI Taxonomy" id="216895"/>
    <lineage>
        <taxon>Bacteria</taxon>
        <taxon>Pseudomonadati</taxon>
        <taxon>Pseudomonadota</taxon>
        <taxon>Gammaproteobacteria</taxon>
        <taxon>Vibrionales</taxon>
        <taxon>Vibrionaceae</taxon>
        <taxon>Vibrio</taxon>
    </lineage>
</organism>
<comment type="function">
    <text evidence="1">Catalyzes the synthesis of beta-nicotinate D-ribonucleotide from nicotinate and 5-phospho-D-ribose 1-phosphate at the expense of ATP.</text>
</comment>
<comment type="catalytic activity">
    <reaction evidence="1">
        <text>nicotinate + 5-phospho-alpha-D-ribose 1-diphosphate + ATP + H2O = nicotinate beta-D-ribonucleotide + ADP + phosphate + diphosphate</text>
        <dbReference type="Rhea" id="RHEA:36163"/>
        <dbReference type="ChEBI" id="CHEBI:15377"/>
        <dbReference type="ChEBI" id="CHEBI:30616"/>
        <dbReference type="ChEBI" id="CHEBI:32544"/>
        <dbReference type="ChEBI" id="CHEBI:33019"/>
        <dbReference type="ChEBI" id="CHEBI:43474"/>
        <dbReference type="ChEBI" id="CHEBI:57502"/>
        <dbReference type="ChEBI" id="CHEBI:58017"/>
        <dbReference type="ChEBI" id="CHEBI:456216"/>
        <dbReference type="EC" id="6.3.4.21"/>
    </reaction>
</comment>
<comment type="pathway">
    <text evidence="1">Cofactor biosynthesis; NAD(+) biosynthesis; nicotinate D-ribonucleotide from nicotinate: step 1/1.</text>
</comment>
<comment type="PTM">
    <text evidence="1">Transiently phosphorylated on a His residue during the reaction cycle. Phosphorylation strongly increases the affinity for substrates and increases the rate of nicotinate D-ribonucleotide production. Dephosphorylation regenerates the low-affinity form of the enzyme, leading to product release.</text>
</comment>
<comment type="similarity">
    <text evidence="1">Belongs to the NAPRTase family.</text>
</comment>